<feature type="chain" id="PRO_0000225843" description="UPF0145 protein YbjQ">
    <location>
        <begin position="1"/>
        <end position="107"/>
    </location>
</feature>
<accession>Q5PGL4</accession>
<organism>
    <name type="scientific">Salmonella paratyphi A (strain ATCC 9150 / SARB42)</name>
    <dbReference type="NCBI Taxonomy" id="295319"/>
    <lineage>
        <taxon>Bacteria</taxon>
        <taxon>Pseudomonadati</taxon>
        <taxon>Pseudomonadota</taxon>
        <taxon>Gammaproteobacteria</taxon>
        <taxon>Enterobacterales</taxon>
        <taxon>Enterobacteriaceae</taxon>
        <taxon>Salmonella</taxon>
    </lineage>
</organism>
<sequence>MQFSTTPTLEGQSIVEYCGVVTGEAILGANIFRDFFAGIRDIVGGRSGAYEKELRKAREIAFQELGEQAKALGADAVVGIDIDYETVGKDGSMLMVSVSGTAVKTRR</sequence>
<proteinExistence type="inferred from homology"/>
<name>YBJQ_SALPA</name>
<protein>
    <recommendedName>
        <fullName evidence="1">UPF0145 protein YbjQ</fullName>
    </recommendedName>
</protein>
<comment type="similarity">
    <text evidence="1">Belongs to the UPF0145 family.</text>
</comment>
<dbReference type="EMBL" id="CP000026">
    <property type="protein sequence ID" value="AAV77780.1"/>
    <property type="molecule type" value="Genomic_DNA"/>
</dbReference>
<dbReference type="RefSeq" id="WP_001160725.1">
    <property type="nucleotide sequence ID" value="NC_006511.1"/>
</dbReference>
<dbReference type="SMR" id="Q5PGL4"/>
<dbReference type="KEGG" id="spt:SPA1869"/>
<dbReference type="HOGENOM" id="CLU_117144_3_0_6"/>
<dbReference type="Proteomes" id="UP000008185">
    <property type="component" value="Chromosome"/>
</dbReference>
<dbReference type="Gene3D" id="3.30.110.70">
    <property type="entry name" value="Hypothetical protein apc22750. Chain B"/>
    <property type="match status" value="1"/>
</dbReference>
<dbReference type="HAMAP" id="MF_00338">
    <property type="entry name" value="UPF0145"/>
    <property type="match status" value="1"/>
</dbReference>
<dbReference type="InterPro" id="IPR035439">
    <property type="entry name" value="UPF0145_dom_sf"/>
</dbReference>
<dbReference type="InterPro" id="IPR002765">
    <property type="entry name" value="UPF0145_YbjQ-like"/>
</dbReference>
<dbReference type="NCBIfam" id="NF002776">
    <property type="entry name" value="PRK02877.1"/>
    <property type="match status" value="1"/>
</dbReference>
<dbReference type="PANTHER" id="PTHR34068">
    <property type="entry name" value="UPF0145 PROTEIN YBJQ"/>
    <property type="match status" value="1"/>
</dbReference>
<dbReference type="PANTHER" id="PTHR34068:SF1">
    <property type="entry name" value="UPF0145 PROTEIN YBJQ"/>
    <property type="match status" value="1"/>
</dbReference>
<dbReference type="Pfam" id="PF01906">
    <property type="entry name" value="YbjQ_1"/>
    <property type="match status" value="1"/>
</dbReference>
<dbReference type="SUPFAM" id="SSF117782">
    <property type="entry name" value="YbjQ-like"/>
    <property type="match status" value="1"/>
</dbReference>
<gene>
    <name evidence="1" type="primary">ybjQ</name>
    <name type="ordered locus">SPA1869</name>
</gene>
<evidence type="ECO:0000255" key="1">
    <source>
        <dbReference type="HAMAP-Rule" id="MF_00338"/>
    </source>
</evidence>
<reference key="1">
    <citation type="journal article" date="2004" name="Nat. Genet.">
        <title>Comparison of genome degradation in Paratyphi A and Typhi, human-restricted serovars of Salmonella enterica that cause typhoid.</title>
        <authorList>
            <person name="McClelland M."/>
            <person name="Sanderson K.E."/>
            <person name="Clifton S.W."/>
            <person name="Latreille P."/>
            <person name="Porwollik S."/>
            <person name="Sabo A."/>
            <person name="Meyer R."/>
            <person name="Bieri T."/>
            <person name="Ozersky P."/>
            <person name="McLellan M."/>
            <person name="Harkins C.R."/>
            <person name="Wang C."/>
            <person name="Nguyen C."/>
            <person name="Berghoff A."/>
            <person name="Elliott G."/>
            <person name="Kohlberg S."/>
            <person name="Strong C."/>
            <person name="Du F."/>
            <person name="Carter J."/>
            <person name="Kremizki C."/>
            <person name="Layman D."/>
            <person name="Leonard S."/>
            <person name="Sun H."/>
            <person name="Fulton L."/>
            <person name="Nash W."/>
            <person name="Miner T."/>
            <person name="Minx P."/>
            <person name="Delehaunty K."/>
            <person name="Fronick C."/>
            <person name="Magrini V."/>
            <person name="Nhan M."/>
            <person name="Warren W."/>
            <person name="Florea L."/>
            <person name="Spieth J."/>
            <person name="Wilson R.K."/>
        </authorList>
    </citation>
    <scope>NUCLEOTIDE SEQUENCE [LARGE SCALE GENOMIC DNA]</scope>
    <source>
        <strain>ATCC 9150 / SARB42</strain>
    </source>
</reference>